<proteinExistence type="inferred from homology"/>
<reference key="1">
    <citation type="journal article" date="2007" name="PLoS ONE">
        <title>A glimpse of streptococcal toxic shock syndrome from comparative genomics of S. suis 2 Chinese isolates.</title>
        <authorList>
            <person name="Chen C."/>
            <person name="Tang J."/>
            <person name="Dong W."/>
            <person name="Wang C."/>
            <person name="Feng Y."/>
            <person name="Wang J."/>
            <person name="Zheng F."/>
            <person name="Pan X."/>
            <person name="Liu D."/>
            <person name="Li M."/>
            <person name="Song Y."/>
            <person name="Zhu X."/>
            <person name="Sun H."/>
            <person name="Feng T."/>
            <person name="Guo Z."/>
            <person name="Ju A."/>
            <person name="Ge J."/>
            <person name="Dong Y."/>
            <person name="Sun W."/>
            <person name="Jiang Y."/>
            <person name="Wang J."/>
            <person name="Yan J."/>
            <person name="Yang H."/>
            <person name="Wang X."/>
            <person name="Gao G.F."/>
            <person name="Yang R."/>
            <person name="Wang J."/>
            <person name="Yu J."/>
        </authorList>
    </citation>
    <scope>NUCLEOTIDE SEQUENCE [LARGE SCALE GENOMIC DNA]</scope>
    <source>
        <strain>05ZYH33</strain>
    </source>
</reference>
<evidence type="ECO:0000255" key="1">
    <source>
        <dbReference type="HAMAP-Rule" id="MF_00170"/>
    </source>
</evidence>
<keyword id="KW-0413">Isomerase</keyword>
<comment type="function">
    <text evidence="1">Catalyzes the reversible conversion of ribose-5-phosphate to ribulose 5-phosphate.</text>
</comment>
<comment type="catalytic activity">
    <reaction evidence="1">
        <text>aldehydo-D-ribose 5-phosphate = D-ribulose 5-phosphate</text>
        <dbReference type="Rhea" id="RHEA:14657"/>
        <dbReference type="ChEBI" id="CHEBI:58121"/>
        <dbReference type="ChEBI" id="CHEBI:58273"/>
        <dbReference type="EC" id="5.3.1.6"/>
    </reaction>
</comment>
<comment type="pathway">
    <text evidence="1">Carbohydrate degradation; pentose phosphate pathway; D-ribose 5-phosphate from D-ribulose 5-phosphate (non-oxidative stage): step 1/1.</text>
</comment>
<comment type="subunit">
    <text evidence="1">Homodimer.</text>
</comment>
<comment type="similarity">
    <text evidence="1">Belongs to the ribose 5-phosphate isomerase family.</text>
</comment>
<organism>
    <name type="scientific">Streptococcus suis (strain 05ZYH33)</name>
    <dbReference type="NCBI Taxonomy" id="391295"/>
    <lineage>
        <taxon>Bacteria</taxon>
        <taxon>Bacillati</taxon>
        <taxon>Bacillota</taxon>
        <taxon>Bacilli</taxon>
        <taxon>Lactobacillales</taxon>
        <taxon>Streptococcaceae</taxon>
        <taxon>Streptococcus</taxon>
    </lineage>
</organism>
<name>RPIA_STRSY</name>
<dbReference type="EC" id="5.3.1.6" evidence="1"/>
<dbReference type="EMBL" id="CP000407">
    <property type="protein sequence ID" value="ABP90415.1"/>
    <property type="molecule type" value="Genomic_DNA"/>
</dbReference>
<dbReference type="SMR" id="A4VWC6"/>
<dbReference type="STRING" id="391295.SSU05_1449"/>
<dbReference type="KEGG" id="ssu:SSU05_1449"/>
<dbReference type="eggNOG" id="COG0120">
    <property type="taxonomic scope" value="Bacteria"/>
</dbReference>
<dbReference type="HOGENOM" id="CLU_056590_1_0_9"/>
<dbReference type="UniPathway" id="UPA00115">
    <property type="reaction ID" value="UER00412"/>
</dbReference>
<dbReference type="GO" id="GO:0004751">
    <property type="term" value="F:ribose-5-phosphate isomerase activity"/>
    <property type="evidence" value="ECO:0007669"/>
    <property type="project" value="UniProtKB-UniRule"/>
</dbReference>
<dbReference type="GO" id="GO:0009052">
    <property type="term" value="P:pentose-phosphate shunt, non-oxidative branch"/>
    <property type="evidence" value="ECO:0007669"/>
    <property type="project" value="UniProtKB-UniRule"/>
</dbReference>
<dbReference type="CDD" id="cd01398">
    <property type="entry name" value="RPI_A"/>
    <property type="match status" value="1"/>
</dbReference>
<dbReference type="FunFam" id="3.40.50.1360:FF:000001">
    <property type="entry name" value="Ribose-5-phosphate isomerase A"/>
    <property type="match status" value="1"/>
</dbReference>
<dbReference type="Gene3D" id="3.30.70.260">
    <property type="match status" value="1"/>
</dbReference>
<dbReference type="Gene3D" id="3.40.50.1360">
    <property type="match status" value="1"/>
</dbReference>
<dbReference type="HAMAP" id="MF_00170">
    <property type="entry name" value="Rib_5P_isom_A"/>
    <property type="match status" value="1"/>
</dbReference>
<dbReference type="InterPro" id="IPR037171">
    <property type="entry name" value="NagB/RpiA_transferase-like"/>
</dbReference>
<dbReference type="InterPro" id="IPR050262">
    <property type="entry name" value="Ribose-5P_isomerase"/>
</dbReference>
<dbReference type="InterPro" id="IPR020672">
    <property type="entry name" value="Ribose5P_isomerase_typA_subgr"/>
</dbReference>
<dbReference type="InterPro" id="IPR004788">
    <property type="entry name" value="Ribose5P_isomerase_type_A"/>
</dbReference>
<dbReference type="NCBIfam" id="NF001924">
    <property type="entry name" value="PRK00702.1"/>
    <property type="match status" value="1"/>
</dbReference>
<dbReference type="NCBIfam" id="TIGR00021">
    <property type="entry name" value="rpiA"/>
    <property type="match status" value="1"/>
</dbReference>
<dbReference type="PANTHER" id="PTHR43748">
    <property type="entry name" value="RIBOSE-5-PHOSPHATE ISOMERASE 3, CHLOROPLASTIC-RELATED"/>
    <property type="match status" value="1"/>
</dbReference>
<dbReference type="PANTHER" id="PTHR43748:SF3">
    <property type="entry name" value="RIBOSE-5-PHOSPHATE ISOMERASE 3, CHLOROPLASTIC-RELATED"/>
    <property type="match status" value="1"/>
</dbReference>
<dbReference type="Pfam" id="PF06026">
    <property type="entry name" value="Rib_5-P_isom_A"/>
    <property type="match status" value="1"/>
</dbReference>
<dbReference type="SUPFAM" id="SSF75445">
    <property type="entry name" value="D-ribose-5-phosphate isomerase (RpiA), lid domain"/>
    <property type="match status" value="1"/>
</dbReference>
<dbReference type="SUPFAM" id="SSF100950">
    <property type="entry name" value="NagB/RpiA/CoA transferase-like"/>
    <property type="match status" value="1"/>
</dbReference>
<feature type="chain" id="PRO_1000017016" description="Ribose-5-phosphate isomerase A">
    <location>
        <begin position="1"/>
        <end position="224"/>
    </location>
</feature>
<feature type="active site" description="Proton acceptor" evidence="1">
    <location>
        <position position="104"/>
    </location>
</feature>
<feature type="binding site" evidence="1">
    <location>
        <begin position="26"/>
        <end position="29"/>
    </location>
    <ligand>
        <name>substrate</name>
    </ligand>
</feature>
<feature type="binding site" evidence="1">
    <location>
        <begin position="82"/>
        <end position="85"/>
    </location>
    <ligand>
        <name>substrate</name>
    </ligand>
</feature>
<feature type="binding site" evidence="1">
    <location>
        <begin position="95"/>
        <end position="98"/>
    </location>
    <ligand>
        <name>substrate</name>
    </ligand>
</feature>
<feature type="binding site" evidence="1">
    <location>
        <position position="122"/>
    </location>
    <ligand>
        <name>substrate</name>
    </ligand>
</feature>
<accession>A4VWC6</accession>
<sequence>MINLKEQVGIKAAEFVTDGMIVGLGTGSTAYYFVQEIGRRVAEEGLQITGVTTSHATAEHAASLGIPLKNIDEVEYVDLTVDGADEVDGDFNGIKGGGAALLMEKVVAVNSKDCIWIVDESKMVQTLGAFKLPVEVVQYGAENLFRLFEKKGYRPSFRMRNGKKHITDMQNFIIDLDLRRIEDTYALAEELDRTVGVVEHGLFIGLISKVIVGTPEGPNIIEKK</sequence>
<gene>
    <name evidence="1" type="primary">rpiA</name>
    <name type="ordered locus">SSU05_1449</name>
</gene>
<protein>
    <recommendedName>
        <fullName evidence="1">Ribose-5-phosphate isomerase A</fullName>
        <ecNumber evidence="1">5.3.1.6</ecNumber>
    </recommendedName>
    <alternativeName>
        <fullName evidence="1">Phosphoriboisomerase A</fullName>
        <shortName evidence="1">PRI</shortName>
    </alternativeName>
</protein>